<keyword id="KW-0106">Calcium</keyword>
<keyword id="KW-0210">Decarboxylase</keyword>
<keyword id="KW-0967">Endosome</keyword>
<keyword id="KW-0333">Golgi apparatus</keyword>
<keyword id="KW-0444">Lipid biosynthesis</keyword>
<keyword id="KW-0443">Lipid metabolism</keyword>
<keyword id="KW-0456">Lyase</keyword>
<keyword id="KW-0472">Membrane</keyword>
<keyword id="KW-0479">Metal-binding</keyword>
<keyword id="KW-0594">Phospholipid biosynthesis</keyword>
<keyword id="KW-1208">Phospholipid metabolism</keyword>
<keyword id="KW-0670">Pyruvate</keyword>
<keyword id="KW-1185">Reference proteome</keyword>
<keyword id="KW-0677">Repeat</keyword>
<keyword id="KW-0865">Zymogen</keyword>
<gene>
    <name evidence="1 4" type="primary">PSD2</name>
    <name type="ordered locus">PAS_chr3_1127</name>
</gene>
<comment type="function">
    <text evidence="1 3">Catalyzes the formation of phosphatidylethanolamine (PtdEtn) from phosphatidylserine (PtdSer). Plays a central role in phospholipid metabolism and in the interorganelle trafficking of phosphatidylserine.</text>
</comment>
<comment type="catalytic activity">
    <reaction evidence="1">
        <text>a 1,2-diacyl-sn-glycero-3-phospho-L-serine + H(+) = a 1,2-diacyl-sn-glycero-3-phosphoethanolamine + CO2</text>
        <dbReference type="Rhea" id="RHEA:20828"/>
        <dbReference type="ChEBI" id="CHEBI:15378"/>
        <dbReference type="ChEBI" id="CHEBI:16526"/>
        <dbReference type="ChEBI" id="CHEBI:57262"/>
        <dbReference type="ChEBI" id="CHEBI:64612"/>
        <dbReference type="EC" id="4.1.1.65"/>
    </reaction>
</comment>
<comment type="cofactor">
    <cofactor evidence="1">
        <name>pyruvate</name>
        <dbReference type="ChEBI" id="CHEBI:15361"/>
    </cofactor>
    <text evidence="1">Binds 1 pyruvoyl group covalently per subunit.</text>
</comment>
<comment type="cofactor">
    <cofactor evidence="2">
        <name>Ca(2+)</name>
        <dbReference type="ChEBI" id="CHEBI:29108"/>
    </cofactor>
</comment>
<comment type="pathway">
    <text evidence="1">Phospholipid metabolism; phosphatidylethanolamine biosynthesis; phosphatidylethanolamine from CDP-diacylglycerol: step 2/2.</text>
</comment>
<comment type="subunit">
    <text evidence="1">Heterodimer of a large membrane-associated beta subunit and a small pyruvoyl-containing alpha subunit. Interacts with pstB2. This interaction may be a means to structurally tether the donor membrane (ER) harboring PstB2 to acceptor membranes (Golgi/endosomes) harboring PSD2 during PtdSer transport to the site of PtdEtn synthesis.</text>
</comment>
<comment type="subcellular location">
    <subcellularLocation>
        <location evidence="1">Golgi apparatus membrane</location>
        <topology evidence="1">Peripheral membrane protein</topology>
        <orientation evidence="1">Cytoplasmic side</orientation>
    </subcellularLocation>
    <subcellularLocation>
        <location evidence="1">Endosome membrane</location>
        <topology evidence="1">Peripheral membrane protein</topology>
        <orientation evidence="1">Cytoplasmic side</orientation>
    </subcellularLocation>
</comment>
<comment type="domain">
    <text evidence="1">The C2 domains have an essential, but non-catalytic function. They may facilitate interaction with PstB2 and are required for lipid transport function.</text>
</comment>
<comment type="PTM">
    <text evidence="1">Is synthesized initially as an inactive proenzyme. Formation of the active enzyme involves a self-maturation process in which the active site pyruvoyl group is generated from an internal serine residue via an autocatalytic post-translational modification. Two non-identical subunits are generated from the proenzyme in this reaction, and the pyruvate is formed at the N-terminus of the alpha chain, which is derived from the carboxyl end of the proenzyme. The autoendoproteolytic cleavage occurs by a canonical serine protease mechanism, in which the side chain hydroxyl group of the serine supplies its oxygen atom to form the C-terminus of the beta chain, while the remainder of the serine residue undergoes an oxidative deamination to produce ammonia and the pyruvoyl prosthetic group on the alpha chain. During this reaction, the Ser that is part of the protease active site of the proenzyme becomes the pyruvoyl prosthetic group, which constitutes an essential element of the active site of the mature decarboxylase.</text>
</comment>
<comment type="similarity">
    <text evidence="1">Belongs to the phosphatidylserine decarboxylase family. PSD-B subfamily. Eukaryotic type II sub-subfamily.</text>
</comment>
<sequence>MSQAFNLVLFTEIKQAQNVKTGNDKEPNSKLRAIVRISERSSKKTPRATPRDDFVYTWNSTISLKLRSQLKLPLIQISVWDKQAHRSVYVGEVRFFLIGLLKSLAYNEHTSSWESTPQWYQLYSSEDKKSFSSGTILVQFRVQQHLSKKNLFFNAKSDVTLSDQTGSSDLLNQYIQAIETSTPRSLQKKAFDLSNPNEQRFYPDIETNALASSILDCEIDSMLEDFTYRKPNITESSLHDDTLTDTDFESIHSDPTIPSSALVPKRILFIEILSVTDLPPYKSFTRATFDMDPFVVISFGKRTYRTSWRKHTLTPVFNERLAFEVCDYEKNYDLQFSVLDKDKFSFHDQVATGFVSVSELLEEKTTDKPCTDFKPTSSNLILLDKPMNANESADNLLDTKKKKYKRNVNTDATLQGGLLRKYELVMSLDGKKNWSRKTKDEYIPILKFNTRFERYEILRRQLWMHLLQGNDTQMKGTLDLIELNYFVDCLGSNLSDKTLASFFEYYDKNPWVGETLTIEQVIDSLERLVFKRQCANTHENYIINIDTCPLCGQGRLSLRQDLDILKHLSICASRDWSTVNKVLKPSFVSSKAATRRWYSRLLIKLTFGQYTLGGNSANILIQDRDTGYILEEKMNIHVRLGIKLLYKSFDKANSRKIKTLLRKLSIRQGIKFDSPSSVSQIPSFIKFHKLDVDDCLLQLDEYKTFNEFFYRKLKPGSRPQEDENNSNIATSPADCRCTVFESITFAKTFWIKGRNFTTKKLFGSFYSREMADLYDECSIGIFRLAPQDYHRFHSPVTGTVGKVQSISGEYFTVNPMAIRSDLDVFGENVRCLLPIQTKEFGRVLVVPVGAMMVGSIILSVKENQEVKKGDELGYFKFGGSTLLVLFPNKRFKFDSDLLANSNNKIETLIKVGMSIGHTPEEPQFERHYRSFEEEPVDQQLRIIRCITGGSTFEESKQATQRRNELLGNEGSPQEKDLQVENLSWEAKNMNLEELEENESLLLYDLVNDGT</sequence>
<feature type="chain" id="PRO_0000435597" description="Phosphatidylserine decarboxylase proenzyme 2">
    <location>
        <begin position="1"/>
        <end position="1010"/>
    </location>
</feature>
<feature type="chain" id="PRO_0000435598" description="Phosphatidylserine decarboxylase 2 beta chain" evidence="1">
    <location>
        <begin position="1"/>
        <end position="879"/>
    </location>
</feature>
<feature type="chain" id="PRO_0000435599" description="Phosphatidylserine decarboxylase 2 alpha chain" evidence="1">
    <location>
        <begin position="880"/>
        <end position="1010"/>
    </location>
</feature>
<feature type="domain" description="C2 1" evidence="2">
    <location>
        <begin position="1"/>
        <end position="114"/>
    </location>
</feature>
<feature type="domain" description="C2 2" evidence="2">
    <location>
        <begin position="247"/>
        <end position="370"/>
    </location>
</feature>
<feature type="domain" description="EF-hand" evidence="1">
    <location>
        <begin position="458"/>
        <end position="493"/>
    </location>
</feature>
<feature type="active site" description="Charge relay system; for autoendoproteolytic cleavage activity" evidence="1">
    <location>
        <position position="734"/>
    </location>
</feature>
<feature type="active site" description="Charge relay system; for autoendoproteolytic cleavage activity" evidence="1">
    <location>
        <position position="793"/>
    </location>
</feature>
<feature type="active site" description="Charge relay system; for autoendoproteolytic cleavage activity" evidence="1">
    <location>
        <position position="880"/>
    </location>
</feature>
<feature type="active site" description="Schiff-base intermediate with substrate; via pyruvic acid; for decarboxylase activity" evidence="1">
    <location>
        <position position="880"/>
    </location>
</feature>
<feature type="binding site" evidence="2">
    <location>
        <position position="342"/>
    </location>
    <ligand>
        <name>Ca(2+)</name>
        <dbReference type="ChEBI" id="CHEBI:29108"/>
    </ligand>
</feature>
<feature type="binding site" evidence="2">
    <location>
        <position position="345"/>
    </location>
    <ligand>
        <name>Ca(2+)</name>
        <dbReference type="ChEBI" id="CHEBI:29108"/>
    </ligand>
</feature>
<feature type="binding site" evidence="2">
    <location>
        <position position="348"/>
    </location>
    <ligand>
        <name>Ca(2+)</name>
        <dbReference type="ChEBI" id="CHEBI:29108"/>
    </ligand>
</feature>
<feature type="site" description="Cleavage (non-hydrolytic); by autocatalysis" evidence="1">
    <location>
        <begin position="879"/>
        <end position="880"/>
    </location>
</feature>
<feature type="modified residue" description="Pyruvic acid (Ser); by autocatalysis" evidence="1">
    <location>
        <position position="880"/>
    </location>
</feature>
<reference key="1">
    <citation type="journal article" date="2009" name="Nat. Biotechnol.">
        <title>Genome sequence of the recombinant protein production host Pichia pastoris.</title>
        <authorList>
            <person name="De Schutter K."/>
            <person name="Lin Y.-C."/>
            <person name="Tiels P."/>
            <person name="Van Hecke A."/>
            <person name="Glinka S."/>
            <person name="Weber-Lehmann J."/>
            <person name="Rouze P."/>
            <person name="Van de Peer Y."/>
            <person name="Callewaert N."/>
        </authorList>
    </citation>
    <scope>NUCLEOTIDE SEQUENCE [LARGE SCALE GENOMIC DNA]</scope>
    <source>
        <strain>GS115 / ATCC 20864</strain>
    </source>
</reference>
<reference key="2">
    <citation type="journal article" date="2009" name="FEMS Yeast Res.">
        <title>Identification of phosphatidylserine decarboxylases 1 and 2 from Pichia pastoris.</title>
        <authorList>
            <person name="Wriessnegger T."/>
            <person name="Sunga A.J."/>
            <person name="Cregg J.M."/>
            <person name="Daum G."/>
        </authorList>
    </citation>
    <scope>FUNCTION</scope>
</reference>
<proteinExistence type="inferred from homology"/>
<dbReference type="EC" id="4.1.1.65" evidence="1"/>
<dbReference type="EMBL" id="FN392321">
    <property type="protein sequence ID" value="CAY71194.1"/>
    <property type="molecule type" value="Genomic_DNA"/>
</dbReference>
<dbReference type="RefSeq" id="XP_002493373.1">
    <property type="nucleotide sequence ID" value="XM_002493328.1"/>
</dbReference>
<dbReference type="SMR" id="C4R360"/>
<dbReference type="FunCoup" id="C4R360">
    <property type="interactions" value="164"/>
</dbReference>
<dbReference type="STRING" id="644223.C4R360"/>
<dbReference type="EnsemblFungi" id="CAY71194">
    <property type="protein sequence ID" value="CAY71194"/>
    <property type="gene ID" value="PAS_chr3_1127"/>
</dbReference>
<dbReference type="GeneID" id="8200159"/>
<dbReference type="KEGG" id="ppa:PAS_chr3_1127"/>
<dbReference type="eggNOG" id="KOG2419">
    <property type="taxonomic scope" value="Eukaryota"/>
</dbReference>
<dbReference type="HOGENOM" id="CLU_002661_0_0_1"/>
<dbReference type="InParanoid" id="C4R360"/>
<dbReference type="OMA" id="TCASRDW"/>
<dbReference type="OrthoDB" id="67700at2759"/>
<dbReference type="UniPathway" id="UPA00558">
    <property type="reaction ID" value="UER00616"/>
</dbReference>
<dbReference type="Proteomes" id="UP000000314">
    <property type="component" value="Chromosome 3"/>
</dbReference>
<dbReference type="GO" id="GO:0010008">
    <property type="term" value="C:endosome membrane"/>
    <property type="evidence" value="ECO:0007669"/>
    <property type="project" value="UniProtKB-SubCell"/>
</dbReference>
<dbReference type="GO" id="GO:0000139">
    <property type="term" value="C:Golgi membrane"/>
    <property type="evidence" value="ECO:0007669"/>
    <property type="project" value="UniProtKB-SubCell"/>
</dbReference>
<dbReference type="GO" id="GO:0005795">
    <property type="term" value="C:Golgi stack"/>
    <property type="evidence" value="ECO:0007669"/>
    <property type="project" value="UniProtKB-UniRule"/>
</dbReference>
<dbReference type="GO" id="GO:0046872">
    <property type="term" value="F:metal ion binding"/>
    <property type="evidence" value="ECO:0007669"/>
    <property type="project" value="UniProtKB-KW"/>
</dbReference>
<dbReference type="GO" id="GO:0004609">
    <property type="term" value="F:phosphatidylserine decarboxylase activity"/>
    <property type="evidence" value="ECO:0007669"/>
    <property type="project" value="UniProtKB-UniRule"/>
</dbReference>
<dbReference type="GO" id="GO:0006656">
    <property type="term" value="P:phosphatidylcholine biosynthetic process"/>
    <property type="evidence" value="ECO:0007669"/>
    <property type="project" value="EnsemblFungi"/>
</dbReference>
<dbReference type="GO" id="GO:0006646">
    <property type="term" value="P:phosphatidylethanolamine biosynthetic process"/>
    <property type="evidence" value="ECO:0007669"/>
    <property type="project" value="UniProtKB-UniRule"/>
</dbReference>
<dbReference type="GO" id="GO:0016540">
    <property type="term" value="P:protein autoprocessing"/>
    <property type="evidence" value="ECO:0007669"/>
    <property type="project" value="UniProtKB-UniRule"/>
</dbReference>
<dbReference type="CDD" id="cd04039">
    <property type="entry name" value="C2_PSD"/>
    <property type="match status" value="1"/>
</dbReference>
<dbReference type="Gene3D" id="2.60.40.150">
    <property type="entry name" value="C2 domain"/>
    <property type="match status" value="2"/>
</dbReference>
<dbReference type="HAMAP" id="MF_00663">
    <property type="entry name" value="PS_decarb_PSD_B_type2"/>
    <property type="match status" value="1"/>
</dbReference>
<dbReference type="InterPro" id="IPR000008">
    <property type="entry name" value="C2_dom"/>
</dbReference>
<dbReference type="InterPro" id="IPR035892">
    <property type="entry name" value="C2_domain_sf"/>
</dbReference>
<dbReference type="InterPro" id="IPR003817">
    <property type="entry name" value="PS_Dcarbxylase"/>
</dbReference>
<dbReference type="InterPro" id="IPR033177">
    <property type="entry name" value="PSD-B"/>
</dbReference>
<dbReference type="InterPro" id="IPR033179">
    <property type="entry name" value="PSD_type2_pro"/>
</dbReference>
<dbReference type="NCBIfam" id="TIGR00163">
    <property type="entry name" value="PS_decarb"/>
    <property type="match status" value="1"/>
</dbReference>
<dbReference type="PANTHER" id="PTHR10067">
    <property type="entry name" value="PHOSPHATIDYLSERINE DECARBOXYLASE"/>
    <property type="match status" value="1"/>
</dbReference>
<dbReference type="PANTHER" id="PTHR10067:SF17">
    <property type="entry name" value="PHOSPHATIDYLSERINE DECARBOXYLASE PROENZYME 2"/>
    <property type="match status" value="1"/>
</dbReference>
<dbReference type="Pfam" id="PF00168">
    <property type="entry name" value="C2"/>
    <property type="match status" value="2"/>
</dbReference>
<dbReference type="Pfam" id="PF02666">
    <property type="entry name" value="PS_Dcarbxylase"/>
    <property type="match status" value="1"/>
</dbReference>
<dbReference type="SMART" id="SM00239">
    <property type="entry name" value="C2"/>
    <property type="match status" value="2"/>
</dbReference>
<dbReference type="SUPFAM" id="SSF49562">
    <property type="entry name" value="C2 domain (Calcium/lipid-binding domain, CaLB)"/>
    <property type="match status" value="2"/>
</dbReference>
<dbReference type="PROSITE" id="PS50004">
    <property type="entry name" value="C2"/>
    <property type="match status" value="2"/>
</dbReference>
<accession>C4R360</accession>
<name>PSD2_KOMPG</name>
<protein>
    <recommendedName>
        <fullName evidence="1 4">Phosphatidylserine decarboxylase proenzyme 2</fullName>
        <ecNumber evidence="1">4.1.1.65</ecNumber>
    </recommendedName>
    <component>
        <recommendedName>
            <fullName evidence="1">Phosphatidylserine decarboxylase 2 beta chain</fullName>
        </recommendedName>
    </component>
    <component>
        <recommendedName>
            <fullName evidence="1">Phosphatidylserine decarboxylase 2 alpha chain</fullName>
        </recommendedName>
    </component>
</protein>
<evidence type="ECO:0000255" key="1">
    <source>
        <dbReference type="HAMAP-Rule" id="MF_03209"/>
    </source>
</evidence>
<evidence type="ECO:0000255" key="2">
    <source>
        <dbReference type="PROSITE-ProRule" id="PRU00041"/>
    </source>
</evidence>
<evidence type="ECO:0000269" key="3">
    <source>
    </source>
</evidence>
<evidence type="ECO:0000303" key="4">
    <source>
    </source>
</evidence>
<organism>
    <name type="scientific">Komagataella phaffii (strain GS115 / ATCC 20864)</name>
    <name type="common">Yeast</name>
    <name type="synonym">Pichia pastoris</name>
    <dbReference type="NCBI Taxonomy" id="644223"/>
    <lineage>
        <taxon>Eukaryota</taxon>
        <taxon>Fungi</taxon>
        <taxon>Dikarya</taxon>
        <taxon>Ascomycota</taxon>
        <taxon>Saccharomycotina</taxon>
        <taxon>Pichiomycetes</taxon>
        <taxon>Pichiales</taxon>
        <taxon>Pichiaceae</taxon>
        <taxon>Komagataella</taxon>
    </lineage>
</organism>